<organism>
    <name type="scientific">Blochmanniella pennsylvanica (strain BPEN)</name>
    <dbReference type="NCBI Taxonomy" id="291272"/>
    <lineage>
        <taxon>Bacteria</taxon>
        <taxon>Pseudomonadati</taxon>
        <taxon>Pseudomonadota</taxon>
        <taxon>Gammaproteobacteria</taxon>
        <taxon>Enterobacterales</taxon>
        <taxon>Enterobacteriaceae</taxon>
        <taxon>ant endosymbionts</taxon>
        <taxon>Candidatus Blochmanniella</taxon>
    </lineage>
</organism>
<keyword id="KW-0066">ATP synthesis</keyword>
<keyword id="KW-0997">Cell inner membrane</keyword>
<keyword id="KW-1003">Cell membrane</keyword>
<keyword id="KW-0139">CF(1)</keyword>
<keyword id="KW-0375">Hydrogen ion transport</keyword>
<keyword id="KW-0406">Ion transport</keyword>
<keyword id="KW-0472">Membrane</keyword>
<keyword id="KW-1185">Reference proteome</keyword>
<keyword id="KW-0813">Transport</keyword>
<name>ATPD_BLOPB</name>
<dbReference type="EMBL" id="CP000016">
    <property type="protein sequence ID" value="AAZ40655.1"/>
    <property type="molecule type" value="Genomic_DNA"/>
</dbReference>
<dbReference type="RefSeq" id="WP_011282561.1">
    <property type="nucleotide sequence ID" value="NC_007292.1"/>
</dbReference>
<dbReference type="SMR" id="Q494C6"/>
<dbReference type="STRING" id="291272.BPEN_005"/>
<dbReference type="KEGG" id="bpn:BPEN_005"/>
<dbReference type="eggNOG" id="COG0712">
    <property type="taxonomic scope" value="Bacteria"/>
</dbReference>
<dbReference type="HOGENOM" id="CLU_085114_3_0_6"/>
<dbReference type="OrthoDB" id="9816221at2"/>
<dbReference type="Proteomes" id="UP000007794">
    <property type="component" value="Chromosome"/>
</dbReference>
<dbReference type="GO" id="GO:0005886">
    <property type="term" value="C:plasma membrane"/>
    <property type="evidence" value="ECO:0007669"/>
    <property type="project" value="UniProtKB-SubCell"/>
</dbReference>
<dbReference type="GO" id="GO:0045259">
    <property type="term" value="C:proton-transporting ATP synthase complex"/>
    <property type="evidence" value="ECO:0007669"/>
    <property type="project" value="UniProtKB-KW"/>
</dbReference>
<dbReference type="GO" id="GO:0046933">
    <property type="term" value="F:proton-transporting ATP synthase activity, rotational mechanism"/>
    <property type="evidence" value="ECO:0007669"/>
    <property type="project" value="UniProtKB-UniRule"/>
</dbReference>
<dbReference type="Gene3D" id="1.10.520.20">
    <property type="entry name" value="N-terminal domain of the delta subunit of the F1F0-ATP synthase"/>
    <property type="match status" value="1"/>
</dbReference>
<dbReference type="HAMAP" id="MF_01416">
    <property type="entry name" value="ATP_synth_delta_bact"/>
    <property type="match status" value="1"/>
</dbReference>
<dbReference type="InterPro" id="IPR026015">
    <property type="entry name" value="ATP_synth_OSCP/delta_N_sf"/>
</dbReference>
<dbReference type="InterPro" id="IPR000711">
    <property type="entry name" value="ATPase_OSCP/dsu"/>
</dbReference>
<dbReference type="NCBIfam" id="TIGR01145">
    <property type="entry name" value="ATP_synt_delta"/>
    <property type="match status" value="1"/>
</dbReference>
<dbReference type="NCBIfam" id="NF004402">
    <property type="entry name" value="PRK05758.2-2"/>
    <property type="match status" value="1"/>
</dbReference>
<dbReference type="PANTHER" id="PTHR11910">
    <property type="entry name" value="ATP SYNTHASE DELTA CHAIN"/>
    <property type="match status" value="1"/>
</dbReference>
<dbReference type="Pfam" id="PF00213">
    <property type="entry name" value="OSCP"/>
    <property type="match status" value="1"/>
</dbReference>
<dbReference type="PRINTS" id="PR00125">
    <property type="entry name" value="ATPASEDELTA"/>
</dbReference>
<dbReference type="SUPFAM" id="SSF47928">
    <property type="entry name" value="N-terminal domain of the delta subunit of the F1F0-ATP synthase"/>
    <property type="match status" value="1"/>
</dbReference>
<evidence type="ECO:0000255" key="1">
    <source>
        <dbReference type="HAMAP-Rule" id="MF_01416"/>
    </source>
</evidence>
<reference key="1">
    <citation type="journal article" date="2005" name="Genome Res.">
        <title>Genome sequence of Blochmannia pennsylvanicus indicates parallel evolutionary trends among bacterial mutualists of insects.</title>
        <authorList>
            <person name="Degnan P.H."/>
            <person name="Lazarus A.B."/>
            <person name="Wernegreen J.J."/>
        </authorList>
    </citation>
    <scope>NUCLEOTIDE SEQUENCE [LARGE SCALE GENOMIC DNA]</scope>
    <source>
        <strain>BPEN</strain>
    </source>
</reference>
<gene>
    <name evidence="1" type="primary">atpH</name>
    <name type="ordered locus">BPEN_005</name>
</gene>
<sequence>MSSMLVVARTYAQAIFDIAVEQKNINKWKSVLDLFSEISLNRLVQSLFFRCLEPKRLSDIFIAICEDYQKKQVDTFSKNIIYIMAENNRLLLLPIVFKEFTYLCSIYVHTVEIEIISAWPLKYNQLKKITDIMAKRLSKTVNPVHKVDKDILAGVIIRIGDTVIDGSIRGRIFRLNHVLQS</sequence>
<protein>
    <recommendedName>
        <fullName evidence="1">ATP synthase subunit delta</fullName>
    </recommendedName>
    <alternativeName>
        <fullName evidence="1">ATP synthase F(1) sector subunit delta</fullName>
    </alternativeName>
    <alternativeName>
        <fullName evidence="1">F-type ATPase subunit delta</fullName>
        <shortName evidence="1">F-ATPase subunit delta</shortName>
    </alternativeName>
</protein>
<proteinExistence type="inferred from homology"/>
<feature type="chain" id="PRO_0000370901" description="ATP synthase subunit delta">
    <location>
        <begin position="1"/>
        <end position="181"/>
    </location>
</feature>
<accession>Q494C6</accession>
<comment type="function">
    <text evidence="1">F(1)F(0) ATP synthase produces ATP from ADP in the presence of a proton or sodium gradient. F-type ATPases consist of two structural domains, F(1) containing the extramembraneous catalytic core and F(0) containing the membrane proton channel, linked together by a central stalk and a peripheral stalk. During catalysis, ATP synthesis in the catalytic domain of F(1) is coupled via a rotary mechanism of the central stalk subunits to proton translocation.</text>
</comment>
<comment type="function">
    <text evidence="1">This protein is part of the stalk that links CF(0) to CF(1). It either transmits conformational changes from CF(0) to CF(1) or is implicated in proton conduction.</text>
</comment>
<comment type="subunit">
    <text evidence="1">F-type ATPases have 2 components, F(1) - the catalytic core - and F(0) - the membrane proton channel. F(1) has five subunits: alpha(3), beta(3), gamma(1), delta(1), epsilon(1). F(0) has three main subunits: a(1), b(2) and c(10-14). The alpha and beta chains form an alternating ring which encloses part of the gamma chain. F(1) is attached to F(0) by a central stalk formed by the gamma and epsilon chains, while a peripheral stalk is formed by the delta and b chains.</text>
</comment>
<comment type="subcellular location">
    <subcellularLocation>
        <location evidence="1">Cell inner membrane</location>
        <topology evidence="1">Peripheral membrane protein</topology>
    </subcellularLocation>
</comment>
<comment type="similarity">
    <text evidence="1">Belongs to the ATPase delta chain family.</text>
</comment>